<keyword id="KW-0002">3D-structure</keyword>
<keyword id="KW-0025">Alternative splicing</keyword>
<keyword id="KW-0507">mRNA processing</keyword>
<keyword id="KW-0508">mRNA splicing</keyword>
<keyword id="KW-0539">Nucleus</keyword>
<keyword id="KW-0597">Phosphoprotein</keyword>
<keyword id="KW-1267">Proteomics identification</keyword>
<keyword id="KW-1185">Reference proteome</keyword>
<keyword id="KW-0677">Repeat</keyword>
<keyword id="KW-0694">RNA-binding</keyword>
<keyword id="KW-0804">Transcription</keyword>
<keyword id="KW-0805">Transcription regulation</keyword>
<keyword id="KW-0832">Ubl conjugation</keyword>
<reference key="1">
    <citation type="submission" date="1998-08" db="EMBL/GenBank/DDBJ databases">
        <title>Cloning and characterization of a new human cDNA homology to human splicing factor (CC1.3) mRNA.</title>
        <authorList>
            <person name="Yang J."/>
            <person name="Yu L."/>
            <person name="Zhou Y."/>
            <person name="Dai F.Y."/>
            <person name="Xin Y.R."/>
            <person name="Zhao S.Y."/>
        </authorList>
    </citation>
    <scope>NUCLEOTIDE SEQUENCE [MRNA] (ISOFORM 2)</scope>
    <scope>VARIANT ALA-393 INS</scope>
</reference>
<reference key="2">
    <citation type="journal article" date="2004" name="Proc. Natl. Acad. Sci. U.S.A.">
        <title>Large-scale cDNA transfection screening for genes related to cancer development and progression.</title>
        <authorList>
            <person name="Wan D."/>
            <person name="Gong Y."/>
            <person name="Qin W."/>
            <person name="Zhang P."/>
            <person name="Li J."/>
            <person name="Wei L."/>
            <person name="Zhou X."/>
            <person name="Li H."/>
            <person name="Qiu X."/>
            <person name="Zhong F."/>
            <person name="He L."/>
            <person name="Yu J."/>
            <person name="Yao G."/>
            <person name="Jiang H."/>
            <person name="Qian L."/>
            <person name="Yu Y."/>
            <person name="Shu H."/>
            <person name="Chen X."/>
            <person name="Xu H."/>
            <person name="Guo M."/>
            <person name="Pan Z."/>
            <person name="Chen Y."/>
            <person name="Ge C."/>
            <person name="Yang S."/>
            <person name="Gu J."/>
        </authorList>
    </citation>
    <scope>NUCLEOTIDE SEQUENCE [LARGE SCALE MRNA] (ISOFORM 5)</scope>
    <scope>VARIANT ALA-393 INS</scope>
</reference>
<reference key="3">
    <citation type="journal article" date="2004" name="Nat. Genet.">
        <title>Complete sequencing and characterization of 21,243 full-length human cDNAs.</title>
        <authorList>
            <person name="Ota T."/>
            <person name="Suzuki Y."/>
            <person name="Nishikawa T."/>
            <person name="Otsuki T."/>
            <person name="Sugiyama T."/>
            <person name="Irie R."/>
            <person name="Wakamatsu A."/>
            <person name="Hayashi K."/>
            <person name="Sato H."/>
            <person name="Nagai K."/>
            <person name="Kimura K."/>
            <person name="Makita H."/>
            <person name="Sekine M."/>
            <person name="Obayashi M."/>
            <person name="Nishi T."/>
            <person name="Shibahara T."/>
            <person name="Tanaka T."/>
            <person name="Ishii S."/>
            <person name="Yamamoto J."/>
            <person name="Saito K."/>
            <person name="Kawai Y."/>
            <person name="Isono Y."/>
            <person name="Nakamura Y."/>
            <person name="Nagahari K."/>
            <person name="Murakami K."/>
            <person name="Yasuda T."/>
            <person name="Iwayanagi T."/>
            <person name="Wagatsuma M."/>
            <person name="Shiratori A."/>
            <person name="Sudo H."/>
            <person name="Hosoiri T."/>
            <person name="Kaku Y."/>
            <person name="Kodaira H."/>
            <person name="Kondo H."/>
            <person name="Sugawara M."/>
            <person name="Takahashi M."/>
            <person name="Kanda K."/>
            <person name="Yokoi T."/>
            <person name="Furuya T."/>
            <person name="Kikkawa E."/>
            <person name="Omura Y."/>
            <person name="Abe K."/>
            <person name="Kamihara K."/>
            <person name="Katsuta N."/>
            <person name="Sato K."/>
            <person name="Tanikawa M."/>
            <person name="Yamazaki M."/>
            <person name="Ninomiya K."/>
            <person name="Ishibashi T."/>
            <person name="Yamashita H."/>
            <person name="Murakawa K."/>
            <person name="Fujimori K."/>
            <person name="Tanai H."/>
            <person name="Kimata M."/>
            <person name="Watanabe M."/>
            <person name="Hiraoka S."/>
            <person name="Chiba Y."/>
            <person name="Ishida S."/>
            <person name="Ono Y."/>
            <person name="Takiguchi S."/>
            <person name="Watanabe S."/>
            <person name="Yosida M."/>
            <person name="Hotuta T."/>
            <person name="Kusano J."/>
            <person name="Kanehori K."/>
            <person name="Takahashi-Fujii A."/>
            <person name="Hara H."/>
            <person name="Tanase T.-O."/>
            <person name="Nomura Y."/>
            <person name="Togiya S."/>
            <person name="Komai F."/>
            <person name="Hara R."/>
            <person name="Takeuchi K."/>
            <person name="Arita M."/>
            <person name="Imose N."/>
            <person name="Musashino K."/>
            <person name="Yuuki H."/>
            <person name="Oshima A."/>
            <person name="Sasaki N."/>
            <person name="Aotsuka S."/>
            <person name="Yoshikawa Y."/>
            <person name="Matsunawa H."/>
            <person name="Ichihara T."/>
            <person name="Shiohata N."/>
            <person name="Sano S."/>
            <person name="Moriya S."/>
            <person name="Momiyama H."/>
            <person name="Satoh N."/>
            <person name="Takami S."/>
            <person name="Terashima Y."/>
            <person name="Suzuki O."/>
            <person name="Nakagawa S."/>
            <person name="Senoh A."/>
            <person name="Mizoguchi H."/>
            <person name="Goto Y."/>
            <person name="Shimizu F."/>
            <person name="Wakebe H."/>
            <person name="Hishigaki H."/>
            <person name="Watanabe T."/>
            <person name="Sugiyama A."/>
            <person name="Takemoto M."/>
            <person name="Kawakami B."/>
            <person name="Yamazaki M."/>
            <person name="Watanabe K."/>
            <person name="Kumagai A."/>
            <person name="Itakura S."/>
            <person name="Fukuzumi Y."/>
            <person name="Fujimori Y."/>
            <person name="Komiyama M."/>
            <person name="Tashiro H."/>
            <person name="Tanigami A."/>
            <person name="Fujiwara T."/>
            <person name="Ono T."/>
            <person name="Yamada K."/>
            <person name="Fujii Y."/>
            <person name="Ozaki K."/>
            <person name="Hirao M."/>
            <person name="Ohmori Y."/>
            <person name="Kawabata A."/>
            <person name="Hikiji T."/>
            <person name="Kobatake N."/>
            <person name="Inagaki H."/>
            <person name="Ikema Y."/>
            <person name="Okamoto S."/>
            <person name="Okitani R."/>
            <person name="Kawakami T."/>
            <person name="Noguchi S."/>
            <person name="Itoh T."/>
            <person name="Shigeta K."/>
            <person name="Senba T."/>
            <person name="Matsumura K."/>
            <person name="Nakajima Y."/>
            <person name="Mizuno T."/>
            <person name="Morinaga M."/>
            <person name="Sasaki M."/>
            <person name="Togashi T."/>
            <person name="Oyama M."/>
            <person name="Hata H."/>
            <person name="Watanabe M."/>
            <person name="Komatsu T."/>
            <person name="Mizushima-Sugano J."/>
            <person name="Satoh T."/>
            <person name="Shirai Y."/>
            <person name="Takahashi Y."/>
            <person name="Nakagawa K."/>
            <person name="Okumura K."/>
            <person name="Nagase T."/>
            <person name="Nomura N."/>
            <person name="Kikuchi H."/>
            <person name="Masuho Y."/>
            <person name="Yamashita R."/>
            <person name="Nakai K."/>
            <person name="Yada T."/>
            <person name="Nakamura Y."/>
            <person name="Ohara O."/>
            <person name="Isogai T."/>
            <person name="Sugano S."/>
        </authorList>
    </citation>
    <scope>NUCLEOTIDE SEQUENCE [LARGE SCALE MRNA] (ISOFORM 4)</scope>
    <scope>VARIANT ALA-393 INS</scope>
    <source>
        <tissue>Neuron</tissue>
    </source>
</reference>
<reference key="4">
    <citation type="journal article" date="2007" name="BMC Genomics">
        <title>The full-ORF clone resource of the German cDNA consortium.</title>
        <authorList>
            <person name="Bechtel S."/>
            <person name="Rosenfelder H."/>
            <person name="Duda A."/>
            <person name="Schmidt C.P."/>
            <person name="Ernst U."/>
            <person name="Wellenreuther R."/>
            <person name="Mehrle A."/>
            <person name="Schuster C."/>
            <person name="Bahr A."/>
            <person name="Bloecker H."/>
            <person name="Heubner D."/>
            <person name="Hoerlein A."/>
            <person name="Michel G."/>
            <person name="Wedler H."/>
            <person name="Koehrer K."/>
            <person name="Ottenwaelder B."/>
            <person name="Poustka A."/>
            <person name="Wiemann S."/>
            <person name="Schupp I."/>
        </authorList>
    </citation>
    <scope>NUCLEOTIDE SEQUENCE [LARGE SCALE MRNA] (ISOFORM 3)</scope>
    <source>
        <tissue>Brain</tissue>
    </source>
</reference>
<reference key="5">
    <citation type="submission" date="2003-01" db="EMBL/GenBank/DDBJ databases">
        <title>Full-length cDNA libraries and normalization.</title>
        <authorList>
            <person name="Li W.B."/>
            <person name="Gruber C."/>
            <person name="Jessee J."/>
            <person name="Polayes D."/>
        </authorList>
    </citation>
    <scope>NUCLEOTIDE SEQUENCE [LARGE SCALE MRNA] (ISOFORM 1)</scope>
    <source>
        <tissue>Placenta</tissue>
    </source>
</reference>
<reference key="6">
    <citation type="journal article" date="2003" name="Nature">
        <title>The DNA sequence and analysis of human chromosome 14.</title>
        <authorList>
            <person name="Heilig R."/>
            <person name="Eckenberg R."/>
            <person name="Petit J.-L."/>
            <person name="Fonknechten N."/>
            <person name="Da Silva C."/>
            <person name="Cattolico L."/>
            <person name="Levy M."/>
            <person name="Barbe V."/>
            <person name="De Berardinis V."/>
            <person name="Ureta-Vidal A."/>
            <person name="Pelletier E."/>
            <person name="Vico V."/>
            <person name="Anthouard V."/>
            <person name="Rowen L."/>
            <person name="Madan A."/>
            <person name="Qin S."/>
            <person name="Sun H."/>
            <person name="Du H."/>
            <person name="Pepin K."/>
            <person name="Artiguenave F."/>
            <person name="Robert C."/>
            <person name="Cruaud C."/>
            <person name="Bruels T."/>
            <person name="Jaillon O."/>
            <person name="Friedlander L."/>
            <person name="Samson G."/>
            <person name="Brottier P."/>
            <person name="Cure S."/>
            <person name="Segurens B."/>
            <person name="Aniere F."/>
            <person name="Samain S."/>
            <person name="Crespeau H."/>
            <person name="Abbasi N."/>
            <person name="Aiach N."/>
            <person name="Boscus D."/>
            <person name="Dickhoff R."/>
            <person name="Dors M."/>
            <person name="Dubois I."/>
            <person name="Friedman C."/>
            <person name="Gouyvenoux M."/>
            <person name="James R."/>
            <person name="Madan A."/>
            <person name="Mairey-Estrada B."/>
            <person name="Mangenot S."/>
            <person name="Martins N."/>
            <person name="Menard M."/>
            <person name="Oztas S."/>
            <person name="Ratcliffe A."/>
            <person name="Shaffer T."/>
            <person name="Trask B."/>
            <person name="Vacherie B."/>
            <person name="Bellemere C."/>
            <person name="Belser C."/>
            <person name="Besnard-Gonnet M."/>
            <person name="Bartol-Mavel D."/>
            <person name="Boutard M."/>
            <person name="Briez-Silla S."/>
            <person name="Combette S."/>
            <person name="Dufosse-Laurent V."/>
            <person name="Ferron C."/>
            <person name="Lechaplais C."/>
            <person name="Louesse C."/>
            <person name="Muselet D."/>
            <person name="Magdelenat G."/>
            <person name="Pateau E."/>
            <person name="Petit E."/>
            <person name="Sirvain-Trukniewicz P."/>
            <person name="Trybou A."/>
            <person name="Vega-Czarny N."/>
            <person name="Bataille E."/>
            <person name="Bluet E."/>
            <person name="Bordelais I."/>
            <person name="Dubois M."/>
            <person name="Dumont C."/>
            <person name="Guerin T."/>
            <person name="Haffray S."/>
            <person name="Hammadi R."/>
            <person name="Muanga J."/>
            <person name="Pellouin V."/>
            <person name="Robert D."/>
            <person name="Wunderle E."/>
            <person name="Gauguet G."/>
            <person name="Roy A."/>
            <person name="Sainte-Marthe L."/>
            <person name="Verdier J."/>
            <person name="Verdier-Discala C."/>
            <person name="Hillier L.W."/>
            <person name="Fulton L."/>
            <person name="McPherson J."/>
            <person name="Matsuda F."/>
            <person name="Wilson R."/>
            <person name="Scarpelli C."/>
            <person name="Gyapay G."/>
            <person name="Wincker P."/>
            <person name="Saurin W."/>
            <person name="Quetier F."/>
            <person name="Waterston R."/>
            <person name="Hood L."/>
            <person name="Weissenbach J."/>
        </authorList>
    </citation>
    <scope>NUCLEOTIDE SEQUENCE [LARGE SCALE GENOMIC DNA]</scope>
</reference>
<reference key="7">
    <citation type="submission" date="2005-09" db="EMBL/GenBank/DDBJ databases">
        <authorList>
            <person name="Mural R.J."/>
            <person name="Istrail S."/>
            <person name="Sutton G.G."/>
            <person name="Florea L."/>
            <person name="Halpern A.L."/>
            <person name="Mobarry C.M."/>
            <person name="Lippert R."/>
            <person name="Walenz B."/>
            <person name="Shatkay H."/>
            <person name="Dew I."/>
            <person name="Miller J.R."/>
            <person name="Flanigan M.J."/>
            <person name="Edwards N.J."/>
            <person name="Bolanos R."/>
            <person name="Fasulo D."/>
            <person name="Halldorsson B.V."/>
            <person name="Hannenhalli S."/>
            <person name="Turner R."/>
            <person name="Yooseph S."/>
            <person name="Lu F."/>
            <person name="Nusskern D.R."/>
            <person name="Shue B.C."/>
            <person name="Zheng X.H."/>
            <person name="Zhong F."/>
            <person name="Delcher A.L."/>
            <person name="Huson D.H."/>
            <person name="Kravitz S.A."/>
            <person name="Mouchard L."/>
            <person name="Reinert K."/>
            <person name="Remington K.A."/>
            <person name="Clark A.G."/>
            <person name="Waterman M.S."/>
            <person name="Eichler E.E."/>
            <person name="Adams M.D."/>
            <person name="Hunkapiller M.W."/>
            <person name="Myers E.W."/>
            <person name="Venter J.C."/>
        </authorList>
    </citation>
    <scope>NUCLEOTIDE SEQUENCE [LARGE SCALE GENOMIC DNA]</scope>
</reference>
<reference key="8">
    <citation type="journal article" date="2004" name="Genome Res.">
        <title>The status, quality, and expansion of the NIH full-length cDNA project: the Mammalian Gene Collection (MGC).</title>
        <authorList>
            <consortium name="The MGC Project Team"/>
        </authorList>
    </citation>
    <scope>NUCLEOTIDE SEQUENCE [LARGE SCALE MRNA] (ISOFORM 2)</scope>
    <scope>VARIANT ALA-393 INS</scope>
    <source>
        <tissue>Muscle</tissue>
        <tissue>Placenta</tissue>
    </source>
</reference>
<reference key="9">
    <citation type="journal article" date="2005" name="Mol. Cell">
        <title>Steroid hormone receptor coactivation and alternative RNA splicing by U2AF65-related proteins CAPERalpha and CAPERbeta.</title>
        <authorList>
            <person name="Dowhan D.H."/>
            <person name="Hong E.P."/>
            <person name="Auboeuf D."/>
            <person name="Dennis A.P."/>
            <person name="Wilson M.M."/>
            <person name="Berget S.M."/>
            <person name="O'Malley B.W."/>
        </authorList>
    </citation>
    <scope>FUNCTION</scope>
    <scope>TISSUE SPECIFICITY</scope>
    <scope>MUTAGENESIS OF 169-PHE--LEU-173; 266-TYR--LEU-270 AND 369-LEU--LEU-373</scope>
</reference>
<reference key="10">
    <citation type="journal article" date="2006" name="Cell">
        <title>Global, in vivo, and site-specific phosphorylation dynamics in signaling networks.</title>
        <authorList>
            <person name="Olsen J.V."/>
            <person name="Blagoev B."/>
            <person name="Gnad F."/>
            <person name="Macek B."/>
            <person name="Kumar C."/>
            <person name="Mortensen P."/>
            <person name="Mann M."/>
        </authorList>
    </citation>
    <scope>PHOSPHORYLATION [LARGE SCALE ANALYSIS] AT SER-149</scope>
    <scope>IDENTIFICATION BY MASS SPECTROMETRY [LARGE SCALE ANALYSIS]</scope>
    <source>
        <tissue>Cervix carcinoma</tissue>
    </source>
</reference>
<reference key="11">
    <citation type="journal article" date="2009" name="Sci. Signal.">
        <title>Quantitative phosphoproteomic analysis of T cell receptor signaling reveals system-wide modulation of protein-protein interactions.</title>
        <authorList>
            <person name="Mayya V."/>
            <person name="Lundgren D.H."/>
            <person name="Hwang S.-I."/>
            <person name="Rezaul K."/>
            <person name="Wu L."/>
            <person name="Eng J.K."/>
            <person name="Rodionov V."/>
            <person name="Han D.K."/>
        </authorList>
    </citation>
    <scope>IDENTIFICATION BY MASS SPECTROMETRY [LARGE SCALE ANALYSIS]</scope>
    <source>
        <tissue>Leukemic T-cell</tissue>
    </source>
</reference>
<reference key="12">
    <citation type="journal article" date="2011" name="Sci. Signal.">
        <title>System-wide temporal characterization of the proteome and phosphoproteome of human embryonic stem cell differentiation.</title>
        <authorList>
            <person name="Rigbolt K.T."/>
            <person name="Prokhorova T.A."/>
            <person name="Akimov V."/>
            <person name="Henningsen J."/>
            <person name="Johansen P.T."/>
            <person name="Kratchmarova I."/>
            <person name="Kassem M."/>
            <person name="Mann M."/>
            <person name="Olsen J.V."/>
            <person name="Blagoev B."/>
        </authorList>
    </citation>
    <scope>PHOSPHORYLATION [LARGE SCALE ANALYSIS] AT SER-149</scope>
    <scope>IDENTIFICATION BY MASS SPECTROMETRY [LARGE SCALE ANALYSIS]</scope>
</reference>
<reference key="13">
    <citation type="journal article" date="2013" name="J. Proteome Res.">
        <title>Toward a comprehensive characterization of a human cancer cell phosphoproteome.</title>
        <authorList>
            <person name="Zhou H."/>
            <person name="Di Palma S."/>
            <person name="Preisinger C."/>
            <person name="Peng M."/>
            <person name="Polat A.N."/>
            <person name="Heck A.J."/>
            <person name="Mohammed S."/>
        </authorList>
    </citation>
    <scope>PHOSPHORYLATION [LARGE SCALE ANALYSIS] AT SER-128 AND SER-149</scope>
    <scope>IDENTIFICATION BY MASS SPECTROMETRY [LARGE SCALE ANALYSIS]</scope>
    <source>
        <tissue>Cervix carcinoma</tissue>
        <tissue>Erythroleukemia</tissue>
    </source>
</reference>
<reference key="14">
    <citation type="journal article" date="2019" name="Cell Rep.">
        <title>Aryl sulfonamides degrade RBM39 and RBM23 by recruitment to CRL4-DCAF15.</title>
        <authorList>
            <person name="Ting T.C."/>
            <person name="Goralski M."/>
            <person name="Klein K."/>
            <person name="Wang B."/>
            <person name="Kim J."/>
            <person name="Xie Y."/>
            <person name="Nijhawan D."/>
        </authorList>
    </citation>
    <scope>UBIQUITINATION</scope>
</reference>
<reference key="15">
    <citation type="journal article" date="2020" name="Nat. Chem. Biol.">
        <title>Structural complementarity facilitates E7820-mediated degradation of RBM39 by DCAF15.</title>
        <authorList>
            <person name="Faust T.B."/>
            <person name="Yoon H."/>
            <person name="Nowak R.P."/>
            <person name="Donovan K.A."/>
            <person name="Li Z."/>
            <person name="Cai Q."/>
            <person name="Eleuteri N.A."/>
            <person name="Zhang T."/>
            <person name="Gray N.S."/>
            <person name="Fischer E.S."/>
        </authorList>
    </citation>
    <scope>UBIQUITINATION</scope>
</reference>
<reference key="16">
    <citation type="journal article" date="2020" name="Nat. Chem. Biol.">
        <title>Structural basis of indisulam-mediated RBM39 recruitment to DCAF15 E3 ligase complex.</title>
        <authorList>
            <person name="Bussiere D.E."/>
            <person name="Xie L."/>
            <person name="Srinivas H."/>
            <person name="Shu W."/>
            <person name="Burke A."/>
            <person name="Be C."/>
            <person name="Zhao J."/>
            <person name="Godbole A."/>
            <person name="King D."/>
            <person name="Karki R.G."/>
            <person name="Hornak V."/>
            <person name="Xu F."/>
            <person name="Cobb J."/>
            <person name="Carte N."/>
            <person name="Frank A.O."/>
            <person name="Frommlet A."/>
            <person name="Graff P."/>
            <person name="Knapp M."/>
            <person name="Fazal A."/>
            <person name="Okram B."/>
            <person name="Jiang S."/>
            <person name="Michellys P.Y."/>
            <person name="Beckwith R."/>
            <person name="Voshol H."/>
            <person name="Wiesmann C."/>
            <person name="Solomon J.M."/>
            <person name="Paulk J."/>
        </authorList>
    </citation>
    <scope>UBIQUITINATION</scope>
</reference>
<reference key="17">
    <citation type="submission" date="2007-04" db="PDB data bank">
        <title>Solution structure of RNA binding domains in RNA binding motif protein 23.</title>
        <authorList>
            <consortium name="RIKEN structural genomics initiative (RSGI)"/>
        </authorList>
    </citation>
    <scope>STRUCTURE BY NMR OF 148-347</scope>
</reference>
<proteinExistence type="evidence at protein level"/>
<sequence length="439" mass="48731">MASDDFDIVIEAMLEAPYKKEEDEQQRKEVKKDYPSNTTSSTSNSGNETSGSSTIGETSKKKRSRSHNKSRDRKRSRSRDRDRYRRRNSRSRSPGRQCRHRSRSWDRRHGSESRSRDHRREDRVHYRSPPLATGYRYGHSKSPHFREKSPVREPVDNLSPEERDARTVFCMQLAARIRPRDLEDFFSAVGKVRDVRIISDRNSRRSKGIAYVEFCEIQSVPLAIGLTGQRLLGVPIIVQASQAEKNRLAAMANNLQKGNGGPMRLYVGSLHFNITEDMLRGIFEPFGKIDNIVLMKDSDTGRSKGYGFITFSDSECARRALEQLNGFELAGRPMRVGHVTERLDGGTDITFPDGDQELDLGSAGGRFQLMAKLAEGAGIQLPSTAAAAAAAAAQAAALQLNGAVPLGALNPAALTALSPALNLASQCFQLSSLFTPQTM</sequence>
<organism>
    <name type="scientific">Homo sapiens</name>
    <name type="common">Human</name>
    <dbReference type="NCBI Taxonomy" id="9606"/>
    <lineage>
        <taxon>Eukaryota</taxon>
        <taxon>Metazoa</taxon>
        <taxon>Chordata</taxon>
        <taxon>Craniata</taxon>
        <taxon>Vertebrata</taxon>
        <taxon>Euteleostomi</taxon>
        <taxon>Mammalia</taxon>
        <taxon>Eutheria</taxon>
        <taxon>Euarchontoglires</taxon>
        <taxon>Primates</taxon>
        <taxon>Haplorrhini</taxon>
        <taxon>Catarrhini</taxon>
        <taxon>Hominidae</taxon>
        <taxon>Homo</taxon>
    </lineage>
</organism>
<evidence type="ECO:0000255" key="1">
    <source>
        <dbReference type="PROSITE-ProRule" id="PRU00176"/>
    </source>
</evidence>
<evidence type="ECO:0000256" key="2">
    <source>
        <dbReference type="SAM" id="MobiDB-lite"/>
    </source>
</evidence>
<evidence type="ECO:0000269" key="3">
    <source>
    </source>
</evidence>
<evidence type="ECO:0000269" key="4">
    <source>
    </source>
</evidence>
<evidence type="ECO:0000269" key="5">
    <source>
    </source>
</evidence>
<evidence type="ECO:0000269" key="6">
    <source>
    </source>
</evidence>
<evidence type="ECO:0000269" key="7">
    <source>
    </source>
</evidence>
<evidence type="ECO:0000269" key="8">
    <source>
    </source>
</evidence>
<evidence type="ECO:0000269" key="9">
    <source>
    </source>
</evidence>
<evidence type="ECO:0000269" key="10">
    <source ref="1"/>
</evidence>
<evidence type="ECO:0000303" key="11">
    <source>
    </source>
</evidence>
<evidence type="ECO:0000303" key="12">
    <source>
    </source>
</evidence>
<evidence type="ECO:0000303" key="13">
    <source>
    </source>
</evidence>
<evidence type="ECO:0000303" key="14">
    <source>
    </source>
</evidence>
<evidence type="ECO:0000303" key="15">
    <source>
    </source>
</evidence>
<evidence type="ECO:0000303" key="16">
    <source>
    </source>
</evidence>
<evidence type="ECO:0000303" key="17">
    <source ref="1"/>
</evidence>
<evidence type="ECO:0000305" key="18"/>
<evidence type="ECO:0000312" key="19">
    <source>
        <dbReference type="HGNC" id="HGNC:20155"/>
    </source>
</evidence>
<evidence type="ECO:0007744" key="20">
    <source>
    </source>
</evidence>
<evidence type="ECO:0007744" key="21">
    <source>
    </source>
</evidence>
<evidence type="ECO:0007744" key="22">
    <source>
    </source>
</evidence>
<evidence type="ECO:0007829" key="23">
    <source>
        <dbReference type="PDB" id="2CQ4"/>
    </source>
</evidence>
<evidence type="ECO:0007829" key="24">
    <source>
        <dbReference type="PDB" id="2DNZ"/>
    </source>
</evidence>
<name>RBM23_HUMAN</name>
<accession>Q86U06</accession>
<accession>D3DS32</accession>
<accession>Q8ND16</accession>
<accession>Q8TB88</accession>
<accession>Q8WY40</accession>
<accession>Q9BUJ1</accession>
<accession>Q9NVV7</accession>
<protein>
    <recommendedName>
        <fullName evidence="16">Probable RNA-binding protein 23</fullName>
    </recommendedName>
    <alternativeName>
        <fullName evidence="14">CAPER beta</fullName>
        <shortName evidence="14">CAPERbeta</shortName>
    </alternativeName>
    <alternativeName>
        <fullName>RNA-binding motif protein 23</fullName>
    </alternativeName>
    <alternativeName>
        <fullName>RNA-binding region-containing protein 4</fullName>
    </alternativeName>
    <alternativeName>
        <fullName>Splicing factor SF2</fullName>
    </alternativeName>
</protein>
<gene>
    <name evidence="16 19" type="primary">RBM23</name>
    <name type="synonym">RNPC4</name>
    <name type="ORF">PP239</name>
</gene>
<feature type="chain" id="PRO_0000081783" description="Probable RNA-binding protein 23">
    <location>
        <begin position="1"/>
        <end position="439"/>
    </location>
</feature>
<feature type="domain" description="RRM 1" evidence="1">
    <location>
        <begin position="166"/>
        <end position="243"/>
    </location>
</feature>
<feature type="domain" description="RRM 2" evidence="1">
    <location>
        <begin position="263"/>
        <end position="341"/>
    </location>
</feature>
<feature type="region of interest" description="Disordered" evidence="2">
    <location>
        <begin position="13"/>
        <end position="159"/>
    </location>
</feature>
<feature type="compositionally biased region" description="Basic and acidic residues" evidence="2">
    <location>
        <begin position="17"/>
        <end position="34"/>
    </location>
</feature>
<feature type="compositionally biased region" description="Low complexity" evidence="2">
    <location>
        <begin position="36"/>
        <end position="57"/>
    </location>
</feature>
<feature type="compositionally biased region" description="Basic residues" evidence="2">
    <location>
        <begin position="60"/>
        <end position="90"/>
    </location>
</feature>
<feature type="compositionally biased region" description="Basic and acidic residues" evidence="2">
    <location>
        <begin position="103"/>
        <end position="125"/>
    </location>
</feature>
<feature type="compositionally biased region" description="Basic and acidic residues" evidence="2">
    <location>
        <begin position="144"/>
        <end position="159"/>
    </location>
</feature>
<feature type="modified residue" description="Phosphoserine" evidence="22">
    <location>
        <position position="128"/>
    </location>
</feature>
<feature type="modified residue" description="Phosphoserine" evidence="20 21 22">
    <location>
        <position position="149"/>
    </location>
</feature>
<feature type="splice variant" id="VSP_008311" description="In isoform 5." evidence="13">
    <original>MASDDFDIVIEAMLEAPYKKEEDEQQRKEVKKDYPSNTTSSTSNSGNETSGSSTIGETSKKKRSRSHNKSRDRKRSRSRDRDRYRRRNSRSRSPGRQCRH</original>
    <variation>MSNKGKKLKRIILAIPPAAPATVAMRPVEAAPSGRQARRRGVGAIIKAGIESAVVVEIGIGIDGEIVGAEVQVGSVVT</variation>
    <location>
        <begin position="1"/>
        <end position="100"/>
    </location>
</feature>
<feature type="splice variant" id="VSP_008312" description="In isoform 2 and isoform 4." evidence="11 12 17">
    <original>KKKRSRSHNKSRDRKRS</original>
    <variation>N</variation>
    <location>
        <begin position="60"/>
        <end position="76"/>
    </location>
</feature>
<feature type="splice variant" id="VSP_008313" description="In isoform 4." evidence="11">
    <location>
        <begin position="135"/>
        <end position="152"/>
    </location>
</feature>
<feature type="splice variant" id="VSP_008314" description="In isoform 3." evidence="15">
    <original>FSDSECARR</original>
    <variation>LHPPPLGTV</variation>
    <location>
        <begin position="311"/>
        <end position="319"/>
    </location>
</feature>
<feature type="splice variant" id="VSP_008315" description="In isoform 3." evidence="15">
    <location>
        <begin position="320"/>
        <end position="439"/>
    </location>
</feature>
<feature type="sequence variant" id="VAR_052221" description="In dbSNP:rs34246954.">
    <original>D</original>
    <variation>N</variation>
    <location>
        <position position="184"/>
    </location>
</feature>
<feature type="sequence variant" id="VAR_016841" evidence="3 4 5 10">
    <original>A</original>
    <variation>AA</variation>
    <location>
        <position position="393"/>
    </location>
</feature>
<feature type="sequence variant" id="VAR_052222" description="In dbSNP:rs1127066.">
    <original>F</original>
    <variation>L</variation>
    <location>
        <position position="428"/>
    </location>
</feature>
<feature type="mutagenesis site" description="In M1; abolished ability to regulate steroid hormone receptor-mediated transcription, without affecting the pre-mRNA splicing factor activity." evidence="6">
    <original>FCMQL</original>
    <variation>ACMQA</variation>
    <location>
        <begin position="169"/>
        <end position="173"/>
    </location>
</feature>
<feature type="mutagenesis site" description="In M2; reduced pre-mRNA splicing factor activity without affecting steroid hormone receptor-mediated transcription." evidence="6">
    <original>YVGSL</original>
    <variation>AVGSA</variation>
    <location>
        <begin position="266"/>
        <end position="270"/>
    </location>
</feature>
<feature type="mutagenesis site" description="In M3; reduced pre-mRNA splicing factor activity without affecting steroid hormone receptor-mediated transcription." evidence="6">
    <original>LMAKL</original>
    <variation>AMAKA</variation>
    <location>
        <begin position="369"/>
        <end position="373"/>
    </location>
</feature>
<feature type="sequence conflict" description="In Ref. 3; AAG24388." evidence="18" ref="3">
    <original>A</original>
    <variation>T</variation>
    <location>
        <position position="132"/>
    </location>
</feature>
<feature type="sequence conflict" description="In Ref. 1; AAP97203." evidence="18" ref="1">
    <original>LEQLNGFELA</original>
    <variation>CGTVEWGLSLL</variation>
    <location>
        <begin position="321"/>
        <end position="330"/>
    </location>
</feature>
<feature type="helix" evidence="23">
    <location>
        <begin position="162"/>
        <end position="165"/>
    </location>
</feature>
<feature type="strand" evidence="23">
    <location>
        <begin position="167"/>
        <end position="172"/>
    </location>
</feature>
<feature type="helix" evidence="23">
    <location>
        <begin position="179"/>
        <end position="186"/>
    </location>
</feature>
<feature type="turn" evidence="23">
    <location>
        <begin position="187"/>
        <end position="189"/>
    </location>
</feature>
<feature type="strand" evidence="23">
    <location>
        <begin position="192"/>
        <end position="197"/>
    </location>
</feature>
<feature type="strand" evidence="23">
    <location>
        <begin position="203"/>
        <end position="205"/>
    </location>
</feature>
<feature type="strand" evidence="23">
    <location>
        <begin position="210"/>
        <end position="215"/>
    </location>
</feature>
<feature type="helix" evidence="23">
    <location>
        <begin position="217"/>
        <end position="219"/>
    </location>
</feature>
<feature type="helix" evidence="23">
    <location>
        <begin position="220"/>
        <end position="226"/>
    </location>
</feature>
<feature type="strand" evidence="23">
    <location>
        <begin position="229"/>
        <end position="231"/>
    </location>
</feature>
<feature type="strand" evidence="23">
    <location>
        <begin position="234"/>
        <end position="240"/>
    </location>
</feature>
<feature type="helix" evidence="23">
    <location>
        <begin position="241"/>
        <end position="248"/>
    </location>
</feature>
<feature type="strand" evidence="24">
    <location>
        <begin position="265"/>
        <end position="269"/>
    </location>
</feature>
<feature type="helix" evidence="24">
    <location>
        <begin position="276"/>
        <end position="283"/>
    </location>
</feature>
<feature type="turn" evidence="24">
    <location>
        <begin position="284"/>
        <end position="286"/>
    </location>
</feature>
<feature type="strand" evidence="24">
    <location>
        <begin position="289"/>
        <end position="295"/>
    </location>
</feature>
<feature type="strand" evidence="24">
    <location>
        <begin position="298"/>
        <end position="300"/>
    </location>
</feature>
<feature type="strand" evidence="24">
    <location>
        <begin position="305"/>
        <end position="312"/>
    </location>
</feature>
<feature type="helix" evidence="24">
    <location>
        <begin position="314"/>
        <end position="324"/>
    </location>
</feature>
<feature type="strand" evidence="24">
    <location>
        <begin position="329"/>
        <end position="332"/>
    </location>
</feature>
<feature type="strand" evidence="24">
    <location>
        <begin position="335"/>
        <end position="340"/>
    </location>
</feature>
<comment type="function">
    <text evidence="6">RNA-binding protein that acts both as a transcription coactivator and pre-mRNA splicing factor (PubMed:15694343). Regulates steroid hormone receptor-mediated transcription, independently of the pre-mRNA splicing factor activity (PubMed:15694343).</text>
</comment>
<comment type="interaction">
    <interactant intactId="EBI-780319">
        <id>Q86U06</id>
    </interactant>
    <interactant intactId="EBI-711810">
        <id>O14503</id>
        <label>BHLHE40</label>
    </interactant>
    <organismsDiffer>false</organismsDiffer>
    <experiments>3</experiments>
</comment>
<comment type="interaction">
    <interactant intactId="EBI-780319">
        <id>Q86U06</id>
    </interactant>
    <interactant intactId="EBI-10175124">
        <id>Q8IZU0</id>
        <label>FAM9B</label>
    </interactant>
    <organismsDiffer>false</organismsDiffer>
    <experiments>3</experiments>
</comment>
<comment type="interaction">
    <interactant intactId="EBI-780319">
        <id>Q86U06</id>
    </interactant>
    <interactant intactId="EBI-10178634">
        <id>P43364-2</id>
        <label>MAGEA11</label>
    </interactant>
    <organismsDiffer>false</organismsDiffer>
    <experiments>3</experiments>
</comment>
<comment type="interaction">
    <interactant intactId="EBI-780319">
        <id>Q86U06</id>
    </interactant>
    <interactant intactId="EBI-716006">
        <id>Q9Y5V3</id>
        <label>MAGED1</label>
    </interactant>
    <organismsDiffer>false</organismsDiffer>
    <experiments>3</experiments>
</comment>
<comment type="interaction">
    <interactant intactId="EBI-780319">
        <id>Q86U06</id>
    </interactant>
    <interactant intactId="EBI-351098">
        <id>O14744</id>
        <label>PRMT5</label>
    </interactant>
    <organismsDiffer>false</organismsDiffer>
    <experiments>3</experiments>
</comment>
<comment type="interaction">
    <interactant intactId="EBI-780319">
        <id>Q86U06</id>
    </interactant>
    <interactant intactId="EBI-593303">
        <id>P78362</id>
        <label>SRPK2</label>
    </interactant>
    <organismsDiffer>false</organismsDiffer>
    <experiments>3</experiments>
</comment>
<comment type="interaction">
    <interactant intactId="EBI-780319">
        <id>Q86U06</id>
    </interactant>
    <interactant intactId="EBI-719493">
        <id>P14373</id>
        <label>TRIM27</label>
    </interactant>
    <organismsDiffer>false</organismsDiffer>
    <experiments>3</experiments>
</comment>
<comment type="interaction">
    <interactant intactId="EBI-10258579">
        <id>Q86U06-2</id>
    </interactant>
    <interactant intactId="EBI-711810">
        <id>O14503</id>
        <label>BHLHE40</label>
    </interactant>
    <organismsDiffer>false</organismsDiffer>
    <experiments>3</experiments>
</comment>
<comment type="interaction">
    <interactant intactId="EBI-10258579">
        <id>Q86U06-2</id>
    </interactant>
    <interactant intactId="EBI-10178634">
        <id>P43364-2</id>
        <label>MAGEA11</label>
    </interactant>
    <organismsDiffer>false</organismsDiffer>
    <experiments>3</experiments>
</comment>
<comment type="subcellular location">
    <subcellularLocation>
        <location evidence="18">Nucleus</location>
    </subcellularLocation>
</comment>
<comment type="alternative products">
    <event type="alternative splicing"/>
    <isoform>
        <id>Q86U06-1</id>
        <name>1</name>
        <sequence type="displayed"/>
    </isoform>
    <isoform>
        <id>Q86U06-2</id>
        <name>2</name>
        <sequence type="described" ref="VSP_008312"/>
    </isoform>
    <isoform>
        <id>Q86U06-3</id>
        <name>3</name>
        <sequence type="described" ref="VSP_008314 VSP_008315"/>
    </isoform>
    <isoform>
        <id>Q86U06-4</id>
        <name>4</name>
        <sequence type="described" ref="VSP_008312 VSP_008313"/>
    </isoform>
    <isoform>
        <id>Q86U06-5</id>
        <name>5</name>
        <sequence type="described" ref="VSP_008311"/>
    </isoform>
</comment>
<comment type="tissue specificity">
    <text evidence="6">Highly expressed in placenta, liver, skeletal muscle, heart and kidney (PubMed:15694343). Expressed at lower levels in the colon, thymus, spleen, small intestine and lung (PubMed:15694343).</text>
</comment>
<comment type="PTM">
    <text evidence="7 8 9">Aryl sulfonamide anticancer drugs, such as indisulam (E7070) or E7820, promote ubiquitination and subsequent degradation by the DCX(DCAF15) complex (PubMed:31686031, PubMed:31693891, PubMed:31819272). Aryl sulfonamide anticancer drugs change the substrate specificity of DCAF15 by acting as a molecular glue that promotes binding between DCAF15 and weak affinity interactor RBM23 (PubMed:31686031, PubMed:31819272).</text>
</comment>
<comment type="similarity">
    <text evidence="18">Belongs to the splicing factor SR family.</text>
</comment>
<dbReference type="EMBL" id="AF087905">
    <property type="protein sequence ID" value="AAP97203.1"/>
    <property type="molecule type" value="mRNA"/>
</dbReference>
<dbReference type="EMBL" id="AF275678">
    <property type="protein sequence ID" value="AAG24388.1"/>
    <property type="molecule type" value="mRNA"/>
</dbReference>
<dbReference type="EMBL" id="AK001344">
    <property type="protein sequence ID" value="BAA91638.1"/>
    <property type="molecule type" value="mRNA"/>
</dbReference>
<dbReference type="EMBL" id="AL834198">
    <property type="protein sequence ID" value="CAD38887.1"/>
    <property type="molecule type" value="mRNA"/>
</dbReference>
<dbReference type="EMBL" id="BX161440">
    <property type="protein sequence ID" value="CAD61910.1"/>
    <property type="molecule type" value="mRNA"/>
</dbReference>
<dbReference type="EMBL" id="AL132780">
    <property type="status" value="NOT_ANNOTATED_CDS"/>
    <property type="molecule type" value="Genomic_DNA"/>
</dbReference>
<dbReference type="EMBL" id="AL135998">
    <property type="status" value="NOT_ANNOTATED_CDS"/>
    <property type="molecule type" value="Genomic_DNA"/>
</dbReference>
<dbReference type="EMBL" id="CH471078">
    <property type="protein sequence ID" value="EAW66223.1"/>
    <property type="molecule type" value="Genomic_DNA"/>
</dbReference>
<dbReference type="EMBL" id="CH471078">
    <property type="protein sequence ID" value="EAW66229.1"/>
    <property type="molecule type" value="Genomic_DNA"/>
</dbReference>
<dbReference type="EMBL" id="BC002566">
    <property type="protein sequence ID" value="AAH02566.1"/>
    <property type="molecule type" value="mRNA"/>
</dbReference>
<dbReference type="EMBL" id="BC024208">
    <property type="protein sequence ID" value="AAH24208.1"/>
    <property type="molecule type" value="mRNA"/>
</dbReference>
<dbReference type="CCDS" id="CCDS41919.1">
    <molecule id="Q86U06-4"/>
</dbReference>
<dbReference type="CCDS" id="CCDS41920.1">
    <molecule id="Q86U06-2"/>
</dbReference>
<dbReference type="CCDS" id="CCDS41921.1">
    <molecule id="Q86U06-1"/>
</dbReference>
<dbReference type="RefSeq" id="NP_001070819.1">
    <molecule id="Q86U06-1"/>
    <property type="nucleotide sequence ID" value="NM_001077351.2"/>
</dbReference>
<dbReference type="RefSeq" id="NP_001070820.1">
    <molecule id="Q86U06-4"/>
    <property type="nucleotide sequence ID" value="NM_001077352.2"/>
</dbReference>
<dbReference type="RefSeq" id="NP_001294973.1">
    <property type="nucleotide sequence ID" value="NM_001308044.1"/>
</dbReference>
<dbReference type="RefSeq" id="NP_001339692.1">
    <molecule id="Q86U06-1"/>
    <property type="nucleotide sequence ID" value="NM_001352763.2"/>
</dbReference>
<dbReference type="RefSeq" id="NP_001339694.1">
    <molecule id="Q86U06-2"/>
    <property type="nucleotide sequence ID" value="NM_001352765.2"/>
</dbReference>
<dbReference type="RefSeq" id="NP_001339695.1">
    <molecule id="Q86U06-1"/>
    <property type="nucleotide sequence ID" value="NM_001352766.2"/>
</dbReference>
<dbReference type="RefSeq" id="NP_060577.3">
    <molecule id="Q86U06-2"/>
    <property type="nucleotide sequence ID" value="NM_018107.4"/>
</dbReference>
<dbReference type="RefSeq" id="XP_016876896.1">
    <property type="nucleotide sequence ID" value="XM_017021407.1"/>
</dbReference>
<dbReference type="RefSeq" id="XP_016876902.1">
    <property type="nucleotide sequence ID" value="XM_017021413.1"/>
</dbReference>
<dbReference type="PDB" id="2CQ4">
    <property type="method" value="NMR"/>
    <property type="chains" value="A=148-248"/>
</dbReference>
<dbReference type="PDB" id="2DNZ">
    <property type="method" value="NMR"/>
    <property type="chains" value="A=265-346"/>
</dbReference>
<dbReference type="PDBsum" id="2CQ4"/>
<dbReference type="PDBsum" id="2DNZ"/>
<dbReference type="SMR" id="Q86U06"/>
<dbReference type="BioGRID" id="120450">
    <property type="interactions" value="94"/>
</dbReference>
<dbReference type="CORUM" id="Q86U06"/>
<dbReference type="FunCoup" id="Q86U06">
    <property type="interactions" value="555"/>
</dbReference>
<dbReference type="IntAct" id="Q86U06">
    <property type="interactions" value="61"/>
</dbReference>
<dbReference type="MINT" id="Q86U06"/>
<dbReference type="STRING" id="9606.ENSP00000352956"/>
<dbReference type="GlyGen" id="Q86U06">
    <property type="glycosylation" value="1 site, 1 O-linked glycan (1 site)"/>
</dbReference>
<dbReference type="iPTMnet" id="Q86U06"/>
<dbReference type="PhosphoSitePlus" id="Q86U06"/>
<dbReference type="SwissPalm" id="Q86U06"/>
<dbReference type="BioMuta" id="RBM23"/>
<dbReference type="DMDM" id="34925229"/>
<dbReference type="jPOST" id="Q86U06"/>
<dbReference type="MassIVE" id="Q86U06"/>
<dbReference type="PaxDb" id="9606-ENSP00000352956"/>
<dbReference type="PeptideAtlas" id="Q86U06"/>
<dbReference type="ProteomicsDB" id="69751">
    <molecule id="Q86U06-1"/>
</dbReference>
<dbReference type="ProteomicsDB" id="69752">
    <molecule id="Q86U06-2"/>
</dbReference>
<dbReference type="ProteomicsDB" id="69753">
    <molecule id="Q86U06-3"/>
</dbReference>
<dbReference type="ProteomicsDB" id="69754">
    <molecule id="Q86U06-4"/>
</dbReference>
<dbReference type="ProteomicsDB" id="69755">
    <molecule id="Q86U06-5"/>
</dbReference>
<dbReference type="Pumba" id="Q86U06"/>
<dbReference type="Antibodypedia" id="114">
    <property type="antibodies" value="72 antibodies from 16 providers"/>
</dbReference>
<dbReference type="DNASU" id="55147"/>
<dbReference type="Ensembl" id="ENST00000346528.9">
    <molecule id="Q86U06-4"/>
    <property type="protein sequence ID" value="ENSP00000339220.5"/>
    <property type="gene ID" value="ENSG00000100461.18"/>
</dbReference>
<dbReference type="Ensembl" id="ENST00000359890.8">
    <molecule id="Q86U06-1"/>
    <property type="protein sequence ID" value="ENSP00000352956.3"/>
    <property type="gene ID" value="ENSG00000100461.18"/>
</dbReference>
<dbReference type="Ensembl" id="ENST00000399922.6">
    <molecule id="Q86U06-2"/>
    <property type="protein sequence ID" value="ENSP00000382806.2"/>
    <property type="gene ID" value="ENSG00000100461.18"/>
</dbReference>
<dbReference type="GeneID" id="55147"/>
<dbReference type="KEGG" id="hsa:55147"/>
<dbReference type="MANE-Select" id="ENST00000359890.8">
    <property type="protein sequence ID" value="ENSP00000352956.3"/>
    <property type="RefSeq nucleotide sequence ID" value="NM_001077351.2"/>
    <property type="RefSeq protein sequence ID" value="NP_001070819.1"/>
</dbReference>
<dbReference type="UCSC" id="uc001whg.4">
    <molecule id="Q86U06-1"/>
    <property type="organism name" value="human"/>
</dbReference>
<dbReference type="AGR" id="HGNC:20155"/>
<dbReference type="CTD" id="55147"/>
<dbReference type="DisGeNET" id="55147"/>
<dbReference type="GeneCards" id="RBM23"/>
<dbReference type="HGNC" id="HGNC:20155">
    <property type="gene designation" value="RBM23"/>
</dbReference>
<dbReference type="HPA" id="ENSG00000100461">
    <property type="expression patterns" value="Low tissue specificity"/>
</dbReference>
<dbReference type="MIM" id="621023">
    <property type="type" value="gene"/>
</dbReference>
<dbReference type="neXtProt" id="NX_Q86U06"/>
<dbReference type="OpenTargets" id="ENSG00000100461"/>
<dbReference type="PharmGKB" id="PA134974852"/>
<dbReference type="VEuPathDB" id="HostDB:ENSG00000100461"/>
<dbReference type="eggNOG" id="KOG0147">
    <property type="taxonomic scope" value="Eukaryota"/>
</dbReference>
<dbReference type="GeneTree" id="ENSGT00940000162546"/>
<dbReference type="HOGENOM" id="CLU_020551_2_0_1"/>
<dbReference type="InParanoid" id="Q86U06"/>
<dbReference type="OMA" id="WERRHSS"/>
<dbReference type="OrthoDB" id="8123449at2759"/>
<dbReference type="PAN-GO" id="Q86U06">
    <property type="GO annotations" value="1 GO annotation based on evolutionary models"/>
</dbReference>
<dbReference type="PhylomeDB" id="Q86U06"/>
<dbReference type="TreeFam" id="TF320448"/>
<dbReference type="PathwayCommons" id="Q86U06"/>
<dbReference type="SignaLink" id="Q86U06"/>
<dbReference type="BioGRID-ORCS" id="55147">
    <property type="hits" value="34 hits in 1159 CRISPR screens"/>
</dbReference>
<dbReference type="CD-CODE" id="804901D1">
    <property type="entry name" value="Nuclear speckle"/>
</dbReference>
<dbReference type="ChiTaRS" id="RBM23">
    <property type="organism name" value="human"/>
</dbReference>
<dbReference type="EvolutionaryTrace" id="Q86U06"/>
<dbReference type="GeneWiki" id="RBM23"/>
<dbReference type="GenomeRNAi" id="55147"/>
<dbReference type="Pharos" id="Q86U06">
    <property type="development level" value="Tbio"/>
</dbReference>
<dbReference type="PRO" id="PR:Q86U06"/>
<dbReference type="Proteomes" id="UP000005640">
    <property type="component" value="Chromosome 14"/>
</dbReference>
<dbReference type="RNAct" id="Q86U06">
    <property type="molecule type" value="protein"/>
</dbReference>
<dbReference type="Bgee" id="ENSG00000100461">
    <property type="expression patterns" value="Expressed in calcaneal tendon and 202 other cell types or tissues"/>
</dbReference>
<dbReference type="ExpressionAtlas" id="Q86U06">
    <property type="expression patterns" value="baseline and differential"/>
</dbReference>
<dbReference type="GO" id="GO:0016020">
    <property type="term" value="C:membrane"/>
    <property type="evidence" value="ECO:0007005"/>
    <property type="project" value="UniProtKB"/>
</dbReference>
<dbReference type="GO" id="GO:0005634">
    <property type="term" value="C:nucleus"/>
    <property type="evidence" value="ECO:0007669"/>
    <property type="project" value="UniProtKB-SubCell"/>
</dbReference>
<dbReference type="GO" id="GO:0003723">
    <property type="term" value="F:RNA binding"/>
    <property type="evidence" value="ECO:0007669"/>
    <property type="project" value="UniProtKB-KW"/>
</dbReference>
<dbReference type="GO" id="GO:1990446">
    <property type="term" value="F:U1 snRNP binding"/>
    <property type="evidence" value="ECO:0000318"/>
    <property type="project" value="GO_Central"/>
</dbReference>
<dbReference type="GO" id="GO:0006397">
    <property type="term" value="P:mRNA processing"/>
    <property type="evidence" value="ECO:0007669"/>
    <property type="project" value="UniProtKB-KW"/>
</dbReference>
<dbReference type="GO" id="GO:0045893">
    <property type="term" value="P:positive regulation of DNA-templated transcription"/>
    <property type="evidence" value="ECO:0000314"/>
    <property type="project" value="UniProtKB"/>
</dbReference>
<dbReference type="GO" id="GO:0048024">
    <property type="term" value="P:regulation of mRNA splicing, via spliceosome"/>
    <property type="evidence" value="ECO:0000314"/>
    <property type="project" value="UniProtKB"/>
</dbReference>
<dbReference type="GO" id="GO:0008380">
    <property type="term" value="P:RNA splicing"/>
    <property type="evidence" value="ECO:0007669"/>
    <property type="project" value="UniProtKB-KW"/>
</dbReference>
<dbReference type="CDD" id="cd12537">
    <property type="entry name" value="RRM1_RBM23"/>
    <property type="match status" value="1"/>
</dbReference>
<dbReference type="CDD" id="cd12284">
    <property type="entry name" value="RRM2_RBM23_RBM39"/>
    <property type="match status" value="1"/>
</dbReference>
<dbReference type="FunFam" id="3.30.70.330:FF:000262">
    <property type="entry name" value="Probable rna-binding protein 23 isoform"/>
    <property type="match status" value="1"/>
</dbReference>
<dbReference type="FunFam" id="3.30.70.330:FF:000373">
    <property type="entry name" value="RNA-binding protein 39 isoform X4"/>
    <property type="match status" value="1"/>
</dbReference>
<dbReference type="Gene3D" id="3.30.70.330">
    <property type="match status" value="2"/>
</dbReference>
<dbReference type="InterPro" id="IPR012677">
    <property type="entry name" value="Nucleotide-bd_a/b_plait_sf"/>
</dbReference>
<dbReference type="InterPro" id="IPR035979">
    <property type="entry name" value="RBD_domain_sf"/>
</dbReference>
<dbReference type="InterPro" id="IPR029123">
    <property type="entry name" value="RBM39_linker"/>
</dbReference>
<dbReference type="InterPro" id="IPR006509">
    <property type="entry name" value="RBM39_SF"/>
</dbReference>
<dbReference type="InterPro" id="IPR000504">
    <property type="entry name" value="RRM_dom"/>
</dbReference>
<dbReference type="NCBIfam" id="TIGR01622">
    <property type="entry name" value="SF-CC1"/>
    <property type="match status" value="1"/>
</dbReference>
<dbReference type="PANTHER" id="PTHR48036">
    <property type="entry name" value="SPLICING FACTOR (PAD-1), PUTATIVE (AFU_ORTHOLOGUE AFUA_1G15810)-RELATED"/>
    <property type="match status" value="1"/>
</dbReference>
<dbReference type="Pfam" id="PF15519">
    <property type="entry name" value="RBM39linker"/>
    <property type="match status" value="1"/>
</dbReference>
<dbReference type="Pfam" id="PF00076">
    <property type="entry name" value="RRM_1"/>
    <property type="match status" value="2"/>
</dbReference>
<dbReference type="SMART" id="SM00360">
    <property type="entry name" value="RRM"/>
    <property type="match status" value="2"/>
</dbReference>
<dbReference type="SUPFAM" id="SSF54928">
    <property type="entry name" value="RNA-binding domain, RBD"/>
    <property type="match status" value="2"/>
</dbReference>
<dbReference type="PROSITE" id="PS50102">
    <property type="entry name" value="RRM"/>
    <property type="match status" value="2"/>
</dbReference>